<proteinExistence type="inferred from homology"/>
<sequence>MARHCELTGKKANNAFSISHSHRRTKRLQHANLQWKRIWWEEGKRWVKLRLSTKAIKTLEKKGLASMAKEAGINLNQY</sequence>
<comment type="similarity">
    <text evidence="1">Belongs to the bacterial ribosomal protein bL28 family.</text>
</comment>
<feature type="chain" id="PRO_1000121616" description="Large ribosomal subunit protein bL28">
    <location>
        <begin position="1"/>
        <end position="78"/>
    </location>
</feature>
<protein>
    <recommendedName>
        <fullName evidence="1">Large ribosomal subunit protein bL28</fullName>
    </recommendedName>
    <alternativeName>
        <fullName evidence="2">50S ribosomal protein L28</fullName>
    </alternativeName>
</protein>
<dbReference type="EMBL" id="CP001291">
    <property type="protein sequence ID" value="ACK71258.1"/>
    <property type="molecule type" value="Genomic_DNA"/>
</dbReference>
<dbReference type="RefSeq" id="WP_015954858.1">
    <property type="nucleotide sequence ID" value="NC_011729.1"/>
</dbReference>
<dbReference type="SMR" id="B7K8R0"/>
<dbReference type="STRING" id="65393.PCC7424_2853"/>
<dbReference type="KEGG" id="cyc:PCC7424_2853"/>
<dbReference type="eggNOG" id="COG0227">
    <property type="taxonomic scope" value="Bacteria"/>
</dbReference>
<dbReference type="HOGENOM" id="CLU_064548_3_0_3"/>
<dbReference type="OrthoDB" id="9805609at2"/>
<dbReference type="Proteomes" id="UP000002384">
    <property type="component" value="Chromosome"/>
</dbReference>
<dbReference type="GO" id="GO:1990904">
    <property type="term" value="C:ribonucleoprotein complex"/>
    <property type="evidence" value="ECO:0007669"/>
    <property type="project" value="UniProtKB-KW"/>
</dbReference>
<dbReference type="GO" id="GO:0005840">
    <property type="term" value="C:ribosome"/>
    <property type="evidence" value="ECO:0007669"/>
    <property type="project" value="UniProtKB-KW"/>
</dbReference>
<dbReference type="GO" id="GO:0003735">
    <property type="term" value="F:structural constituent of ribosome"/>
    <property type="evidence" value="ECO:0007669"/>
    <property type="project" value="InterPro"/>
</dbReference>
<dbReference type="GO" id="GO:0006412">
    <property type="term" value="P:translation"/>
    <property type="evidence" value="ECO:0007669"/>
    <property type="project" value="UniProtKB-UniRule"/>
</dbReference>
<dbReference type="Gene3D" id="2.30.170.40">
    <property type="entry name" value="Ribosomal protein L28/L24"/>
    <property type="match status" value="1"/>
</dbReference>
<dbReference type="HAMAP" id="MF_00373">
    <property type="entry name" value="Ribosomal_bL28"/>
    <property type="match status" value="1"/>
</dbReference>
<dbReference type="InterPro" id="IPR026569">
    <property type="entry name" value="Ribosomal_bL28"/>
</dbReference>
<dbReference type="InterPro" id="IPR034704">
    <property type="entry name" value="Ribosomal_bL28/bL31-like_sf"/>
</dbReference>
<dbReference type="InterPro" id="IPR001383">
    <property type="entry name" value="Ribosomal_bL28_bact-type"/>
</dbReference>
<dbReference type="InterPro" id="IPR037147">
    <property type="entry name" value="Ribosomal_bL28_sf"/>
</dbReference>
<dbReference type="NCBIfam" id="TIGR00009">
    <property type="entry name" value="L28"/>
    <property type="match status" value="1"/>
</dbReference>
<dbReference type="PANTHER" id="PTHR13528">
    <property type="entry name" value="39S RIBOSOMAL PROTEIN L28, MITOCHONDRIAL"/>
    <property type="match status" value="1"/>
</dbReference>
<dbReference type="PANTHER" id="PTHR13528:SF2">
    <property type="entry name" value="LARGE RIBOSOMAL SUBUNIT PROTEIN BL28M"/>
    <property type="match status" value="1"/>
</dbReference>
<dbReference type="Pfam" id="PF00830">
    <property type="entry name" value="Ribosomal_L28"/>
    <property type="match status" value="1"/>
</dbReference>
<dbReference type="SUPFAM" id="SSF143800">
    <property type="entry name" value="L28p-like"/>
    <property type="match status" value="1"/>
</dbReference>
<accession>B7K8R0</accession>
<keyword id="KW-1185">Reference proteome</keyword>
<keyword id="KW-0687">Ribonucleoprotein</keyword>
<keyword id="KW-0689">Ribosomal protein</keyword>
<gene>
    <name evidence="1" type="primary">rpmB</name>
    <name evidence="1" type="synonym">rpl28</name>
    <name type="ordered locus">PCC7424_2853</name>
</gene>
<reference key="1">
    <citation type="journal article" date="2011" name="MBio">
        <title>Novel metabolic attributes of the genus Cyanothece, comprising a group of unicellular nitrogen-fixing Cyanobacteria.</title>
        <authorList>
            <person name="Bandyopadhyay A."/>
            <person name="Elvitigala T."/>
            <person name="Welsh E."/>
            <person name="Stockel J."/>
            <person name="Liberton M."/>
            <person name="Min H."/>
            <person name="Sherman L.A."/>
            <person name="Pakrasi H.B."/>
        </authorList>
    </citation>
    <scope>NUCLEOTIDE SEQUENCE [LARGE SCALE GENOMIC DNA]</scope>
    <source>
        <strain>PCC 7424</strain>
    </source>
</reference>
<organism>
    <name type="scientific">Gloeothece citriformis (strain PCC 7424)</name>
    <name type="common">Cyanothece sp. (strain PCC 7424)</name>
    <dbReference type="NCBI Taxonomy" id="65393"/>
    <lineage>
        <taxon>Bacteria</taxon>
        <taxon>Bacillati</taxon>
        <taxon>Cyanobacteriota</taxon>
        <taxon>Cyanophyceae</taxon>
        <taxon>Oscillatoriophycideae</taxon>
        <taxon>Chroococcales</taxon>
        <taxon>Aphanothecaceae</taxon>
        <taxon>Gloeothece</taxon>
        <taxon>Gloeothece citriformis</taxon>
    </lineage>
</organism>
<evidence type="ECO:0000255" key="1">
    <source>
        <dbReference type="HAMAP-Rule" id="MF_00373"/>
    </source>
</evidence>
<evidence type="ECO:0000305" key="2"/>
<name>RL28_GLOC7</name>